<accession>Q6P642</accession>
<comment type="function">
    <text evidence="1">Has a stimulatory effect on the ATPase activity of HSP70 in a dose-dependent and time-dependent manner and hence acts as a co-chaperone of HSP70. Plays an indispensable role in the organization of KRT8/KRT18 filaments. Acts as an endogenous molecular chaperone for neuronal proteins including huntingtin. Suppresses aggregation and toxicity of polyglutamine-containing, aggregation-prone proteins. Also reduces cellular toxicity and caspase-3 activity.</text>
</comment>
<comment type="subunit">
    <text evidence="1">Homooligomer.</text>
</comment>
<comment type="subcellular location">
    <subcellularLocation>
        <location evidence="1">Cytoplasm</location>
        <location evidence="1">Perinuclear region</location>
    </subcellularLocation>
    <subcellularLocation>
        <location evidence="1">Nucleus</location>
    </subcellularLocation>
</comment>
<name>DNJB6_XENTR</name>
<reference evidence="3" key="1">
    <citation type="submission" date="2003-11" db="EMBL/GenBank/DDBJ databases">
        <authorList>
            <consortium name="NIH - Xenopus Gene Collection (XGC) project"/>
        </authorList>
    </citation>
    <scope>NUCLEOTIDE SEQUENCE [LARGE SCALE MRNA]</scope>
    <source>
        <tissue evidence="3">Embryo</tissue>
    </source>
</reference>
<feature type="chain" id="PRO_0000292344" description="DnaJ homolog subfamily B member 6">
    <location>
        <begin position="1"/>
        <end position="242"/>
    </location>
</feature>
<feature type="domain" description="J" evidence="2">
    <location>
        <begin position="3"/>
        <end position="69"/>
    </location>
</feature>
<organism>
    <name type="scientific">Xenopus tropicalis</name>
    <name type="common">Western clawed frog</name>
    <name type="synonym">Silurana tropicalis</name>
    <dbReference type="NCBI Taxonomy" id="8364"/>
    <lineage>
        <taxon>Eukaryota</taxon>
        <taxon>Metazoa</taxon>
        <taxon>Chordata</taxon>
        <taxon>Craniata</taxon>
        <taxon>Vertebrata</taxon>
        <taxon>Euteleostomi</taxon>
        <taxon>Amphibia</taxon>
        <taxon>Batrachia</taxon>
        <taxon>Anura</taxon>
        <taxon>Pipoidea</taxon>
        <taxon>Pipidae</taxon>
        <taxon>Xenopodinae</taxon>
        <taxon>Xenopus</taxon>
        <taxon>Silurana</taxon>
    </lineage>
</organism>
<gene>
    <name evidence="1" type="primary">dnajb6</name>
</gene>
<proteinExistence type="evidence at transcript level"/>
<dbReference type="EMBL" id="BC062492">
    <property type="protein sequence ID" value="AAH62492.1"/>
    <property type="molecule type" value="mRNA"/>
</dbReference>
<dbReference type="RefSeq" id="NP_989107.1">
    <property type="nucleotide sequence ID" value="NM_203776.1"/>
</dbReference>
<dbReference type="SMR" id="Q6P642"/>
<dbReference type="FunCoup" id="Q6P642">
    <property type="interactions" value="2963"/>
</dbReference>
<dbReference type="STRING" id="8364.ENSXETP00000013020"/>
<dbReference type="PaxDb" id="8364-ENSXETP00000046731"/>
<dbReference type="DNASU" id="394712"/>
<dbReference type="GeneID" id="394712"/>
<dbReference type="KEGG" id="xtr:394712"/>
<dbReference type="AGR" id="Xenbase:XB-GENE-972413"/>
<dbReference type="CTD" id="10049"/>
<dbReference type="Xenbase" id="XB-GENE-972413">
    <property type="gene designation" value="dnajb6"/>
</dbReference>
<dbReference type="eggNOG" id="KOG0714">
    <property type="taxonomic scope" value="Eukaryota"/>
</dbReference>
<dbReference type="InParanoid" id="Q6P642"/>
<dbReference type="OrthoDB" id="10250354at2759"/>
<dbReference type="Proteomes" id="UP000008143">
    <property type="component" value="Chromosome 6"/>
</dbReference>
<dbReference type="GO" id="GO:0005634">
    <property type="term" value="C:nucleus"/>
    <property type="evidence" value="ECO:0007669"/>
    <property type="project" value="UniProtKB-SubCell"/>
</dbReference>
<dbReference type="GO" id="GO:0048471">
    <property type="term" value="C:perinuclear region of cytoplasm"/>
    <property type="evidence" value="ECO:0007669"/>
    <property type="project" value="UniProtKB-SubCell"/>
</dbReference>
<dbReference type="GO" id="GO:0030544">
    <property type="term" value="F:Hsp70 protein binding"/>
    <property type="evidence" value="ECO:0007669"/>
    <property type="project" value="InterPro"/>
</dbReference>
<dbReference type="GO" id="GO:0051082">
    <property type="term" value="F:unfolded protein binding"/>
    <property type="evidence" value="ECO:0007669"/>
    <property type="project" value="InterPro"/>
</dbReference>
<dbReference type="GO" id="GO:0061077">
    <property type="term" value="P:chaperone-mediated protein folding"/>
    <property type="evidence" value="ECO:0007669"/>
    <property type="project" value="InterPro"/>
</dbReference>
<dbReference type="CDD" id="cd06257">
    <property type="entry name" value="DnaJ"/>
    <property type="match status" value="1"/>
</dbReference>
<dbReference type="FunFam" id="1.10.287.110:FF:000022">
    <property type="entry name" value="DnaJ homolog subfamily B member 6"/>
    <property type="match status" value="1"/>
</dbReference>
<dbReference type="Gene3D" id="1.10.287.110">
    <property type="entry name" value="DnaJ domain"/>
    <property type="match status" value="1"/>
</dbReference>
<dbReference type="InterPro" id="IPR001623">
    <property type="entry name" value="DnaJ_domain"/>
</dbReference>
<dbReference type="InterPro" id="IPR018253">
    <property type="entry name" value="DnaJ_domain_CS"/>
</dbReference>
<dbReference type="InterPro" id="IPR043183">
    <property type="entry name" value="DNJB2/6-like"/>
</dbReference>
<dbReference type="InterPro" id="IPR036869">
    <property type="entry name" value="J_dom_sf"/>
</dbReference>
<dbReference type="PANTHER" id="PTHR45168">
    <property type="entry name" value="DNAJ HOMOLOG SUBFAMILY B MEMBER 2"/>
    <property type="match status" value="1"/>
</dbReference>
<dbReference type="PANTHER" id="PTHR45168:SF4">
    <property type="entry name" value="SIMILAR TO DNAJ HOMOLOG SUBFAMILY B MEMBER 6 (HEAT SHOCK PROTEIN J2) (HSJ-2) (MRJ) (MDJ4)"/>
    <property type="match status" value="1"/>
</dbReference>
<dbReference type="Pfam" id="PF00226">
    <property type="entry name" value="DnaJ"/>
    <property type="match status" value="1"/>
</dbReference>
<dbReference type="PRINTS" id="PR00625">
    <property type="entry name" value="JDOMAIN"/>
</dbReference>
<dbReference type="SMART" id="SM00271">
    <property type="entry name" value="DnaJ"/>
    <property type="match status" value="1"/>
</dbReference>
<dbReference type="SUPFAM" id="SSF46565">
    <property type="entry name" value="Chaperone J-domain"/>
    <property type="match status" value="1"/>
</dbReference>
<dbReference type="PROSITE" id="PS00636">
    <property type="entry name" value="DNAJ_1"/>
    <property type="match status" value="1"/>
</dbReference>
<dbReference type="PROSITE" id="PS50076">
    <property type="entry name" value="DNAJ_2"/>
    <property type="match status" value="1"/>
</dbReference>
<evidence type="ECO:0000250" key="1">
    <source>
        <dbReference type="UniProtKB" id="O75190"/>
    </source>
</evidence>
<evidence type="ECO:0000255" key="2">
    <source>
        <dbReference type="PROSITE-ProRule" id="PRU00286"/>
    </source>
</evidence>
<evidence type="ECO:0000312" key="3">
    <source>
        <dbReference type="EMBL" id="AAH62492.1"/>
    </source>
</evidence>
<sequence>MVEYYDVLGVQRNASPEDIKKAYRKLALKWHPDKNPDNKDEAERRFKEVAEAYEVLSDSKKRDIYDKYGKEGLTGGGGGSHFDNPYEFGFTFRSPDDVFRDFFGGRDPFSFDLFADDPFDDFFGRRGHRANRSRPGGSFLSTFGGFPAFGPTFSPFDSGFSSSFGSFGGHGGFSSFSSSSFGGSGMGNFRSVSTSTKVVNGRRVTTKRIVENGQERIEVEEDGQLKSLTINGKEQLLRLDNK</sequence>
<protein>
    <recommendedName>
        <fullName>DnaJ homolog subfamily B member 6</fullName>
    </recommendedName>
</protein>
<keyword id="KW-0143">Chaperone</keyword>
<keyword id="KW-0963">Cytoplasm</keyword>
<keyword id="KW-0539">Nucleus</keyword>
<keyword id="KW-1185">Reference proteome</keyword>